<reference key="1">
    <citation type="journal article" date="1995" name="Plant Physiol.">
        <title>Nucleotide sequence of a Clarkia breweri cDNA clone of Ipi1, a gene encoding isopentenyl pyrophosphate isomerase.</title>
        <authorList>
            <person name="Blanc V.M."/>
            <person name="Pichersky E."/>
        </authorList>
    </citation>
    <scope>NUCLEOTIDE SEQUENCE [MRNA]</scope>
</reference>
<organism>
    <name type="scientific">Clarkia breweri</name>
    <name type="common">Fairy fans</name>
    <name type="synonym">Eucharidium breweri</name>
    <dbReference type="NCBI Taxonomy" id="36903"/>
    <lineage>
        <taxon>Eukaryota</taxon>
        <taxon>Viridiplantae</taxon>
        <taxon>Streptophyta</taxon>
        <taxon>Embryophyta</taxon>
        <taxon>Tracheophyta</taxon>
        <taxon>Spermatophyta</taxon>
        <taxon>Magnoliopsida</taxon>
        <taxon>eudicotyledons</taxon>
        <taxon>Gunneridae</taxon>
        <taxon>Pentapetalae</taxon>
        <taxon>rosids</taxon>
        <taxon>malvids</taxon>
        <taxon>Myrtales</taxon>
        <taxon>Onagraceae</taxon>
        <taxon>Onagroideae</taxon>
        <taxon>Onagreae</taxon>
        <taxon>Clarkia</taxon>
    </lineage>
</organism>
<name>IDI1_CLABR</name>
<dbReference type="EC" id="5.3.3.2"/>
<dbReference type="EMBL" id="X82627">
    <property type="protein sequence ID" value="CAA57947.1"/>
    <property type="status" value="ALT_INIT"/>
    <property type="molecule type" value="mRNA"/>
</dbReference>
<dbReference type="PIR" id="S49588">
    <property type="entry name" value="S49588"/>
</dbReference>
<dbReference type="SMR" id="Q39472"/>
<dbReference type="UniPathway" id="UPA00059">
    <property type="reaction ID" value="UER00104"/>
</dbReference>
<dbReference type="UniPathway" id="UPA00668"/>
<dbReference type="GO" id="GO:0005737">
    <property type="term" value="C:cytoplasm"/>
    <property type="evidence" value="ECO:0007669"/>
    <property type="project" value="TreeGrafter"/>
</dbReference>
<dbReference type="GO" id="GO:0004452">
    <property type="term" value="F:isopentenyl-diphosphate delta-isomerase activity"/>
    <property type="evidence" value="ECO:0007669"/>
    <property type="project" value="UniProtKB-EC"/>
</dbReference>
<dbReference type="GO" id="GO:0015995">
    <property type="term" value="P:chlorophyll biosynthetic process"/>
    <property type="evidence" value="ECO:0007669"/>
    <property type="project" value="UniProtKB-UniPathway"/>
</dbReference>
<dbReference type="GO" id="GO:0050992">
    <property type="term" value="P:dimethylallyl diphosphate biosynthetic process"/>
    <property type="evidence" value="ECO:0007669"/>
    <property type="project" value="UniProtKB-UniPathway"/>
</dbReference>
<dbReference type="GO" id="GO:0009240">
    <property type="term" value="P:isopentenyl diphosphate biosynthetic process"/>
    <property type="evidence" value="ECO:0007669"/>
    <property type="project" value="TreeGrafter"/>
</dbReference>
<dbReference type="GO" id="GO:0015979">
    <property type="term" value="P:photosynthesis"/>
    <property type="evidence" value="ECO:0007669"/>
    <property type="project" value="UniProtKB-KW"/>
</dbReference>
<dbReference type="CDD" id="cd02885">
    <property type="entry name" value="NUDIX_IPP_Isomerase"/>
    <property type="match status" value="1"/>
</dbReference>
<dbReference type="FunFam" id="3.90.79.10:FF:000025">
    <property type="entry name" value="isopentenyl-diphosphate Delta-isomerase I"/>
    <property type="match status" value="1"/>
</dbReference>
<dbReference type="Gene3D" id="3.90.79.10">
    <property type="entry name" value="Nucleoside Triphosphate Pyrophosphohydrolase"/>
    <property type="match status" value="1"/>
</dbReference>
<dbReference type="InterPro" id="IPR011876">
    <property type="entry name" value="IsopentenylPP_isomerase_typ1"/>
</dbReference>
<dbReference type="InterPro" id="IPR015797">
    <property type="entry name" value="NUDIX_hydrolase-like_dom_sf"/>
</dbReference>
<dbReference type="InterPro" id="IPR000086">
    <property type="entry name" value="NUDIX_hydrolase_dom"/>
</dbReference>
<dbReference type="NCBIfam" id="TIGR02150">
    <property type="entry name" value="IPP_isom_1"/>
    <property type="match status" value="1"/>
</dbReference>
<dbReference type="PANTHER" id="PTHR10885">
    <property type="entry name" value="ISOPENTENYL-DIPHOSPHATE DELTA-ISOMERASE"/>
    <property type="match status" value="1"/>
</dbReference>
<dbReference type="PANTHER" id="PTHR10885:SF0">
    <property type="entry name" value="ISOPENTENYL-DIPHOSPHATE DELTA-ISOMERASE"/>
    <property type="match status" value="1"/>
</dbReference>
<dbReference type="Pfam" id="PF00293">
    <property type="entry name" value="NUDIX"/>
    <property type="match status" value="1"/>
</dbReference>
<dbReference type="SUPFAM" id="SSF55811">
    <property type="entry name" value="Nudix"/>
    <property type="match status" value="1"/>
</dbReference>
<dbReference type="PROSITE" id="PS51462">
    <property type="entry name" value="NUDIX"/>
    <property type="match status" value="1"/>
</dbReference>
<sequence>MSSSMLNFTASRIVSLPLLSSPPSRVHLPLCFFSPISLTQRFSAKLTFSSQATTMGEVVDAGMDAVQRRLMFEDECILVDENDKVVGHESKYNCHLMEKIESENLLHRAFSVFLFNSKYELLLQQRSATKVTFPLVWTNTCCSHPLYRESELIDENCLGVRNAAQRKLLDELGIPAEDLPVDQFIPLSRILYKAPSDGKWGEHELDYLLFIIRDVNLDPNPDEVAEVKYMNRDDLKELLRKADAEEEGVKLSPWFRLVVDNFLFKWWDHVEKGSLKDAADMKTIHKL</sequence>
<accession>Q39472</accession>
<evidence type="ECO:0000250" key="1"/>
<evidence type="ECO:0000255" key="2">
    <source>
        <dbReference type="PROSITE-ProRule" id="PRU00794"/>
    </source>
</evidence>
<evidence type="ECO:0000305" key="3"/>
<comment type="function">
    <text evidence="1">Catalyzes the 1,3-allylic rearrangement of the homoallylic substrate isopentenyl (IPP) to its highly electrophilic allylic isomer, dimethylallyl diphosphate (DMAPP).</text>
</comment>
<comment type="catalytic activity">
    <reaction>
        <text>isopentenyl diphosphate = dimethylallyl diphosphate</text>
        <dbReference type="Rhea" id="RHEA:23284"/>
        <dbReference type="ChEBI" id="CHEBI:57623"/>
        <dbReference type="ChEBI" id="CHEBI:128769"/>
        <dbReference type="EC" id="5.3.3.2"/>
    </reaction>
</comment>
<comment type="pathway">
    <text>Isoprenoid biosynthesis; dimethylallyl diphosphate biosynthesis; dimethylallyl diphosphate from isopentenyl diphosphate: step 1/1.</text>
</comment>
<comment type="pathway">
    <text>Porphyrin-containing compound metabolism; chlorophyll biosynthesis.</text>
</comment>
<comment type="similarity">
    <text evidence="3">Belongs to the IPP isomerase type 1 family.</text>
</comment>
<comment type="sequence caution" evidence="3">
    <conflict type="erroneous initiation">
        <sequence resource="EMBL-CDS" id="CAA57947"/>
    </conflict>
</comment>
<keyword id="KW-0149">Chlorophyll biosynthesis</keyword>
<keyword id="KW-0413">Isomerase</keyword>
<keyword id="KW-0414">Isoprene biosynthesis</keyword>
<keyword id="KW-0602">Photosynthesis</keyword>
<gene>
    <name type="primary">IPI1</name>
</gene>
<feature type="chain" id="PRO_0000205236" description="Isopentenyl-diphosphate Delta-isomerase I">
    <location>
        <begin position="1"/>
        <end position="287"/>
    </location>
</feature>
<feature type="domain" description="Nudix hydrolase" evidence="2">
    <location>
        <begin position="105"/>
        <end position="257"/>
    </location>
</feature>
<feature type="active site" evidence="1">
    <location>
        <position position="142"/>
    </location>
</feature>
<feature type="active site" evidence="1">
    <location>
        <position position="207"/>
    </location>
</feature>
<protein>
    <recommendedName>
        <fullName>Isopentenyl-diphosphate Delta-isomerase I</fullName>
        <ecNumber>5.3.3.2</ecNumber>
    </recommendedName>
    <alternativeName>
        <fullName>Isopentenyl pyrophosphate isomerase I</fullName>
        <shortName>IPP isomerase I</shortName>
    </alternativeName>
</protein>
<proteinExistence type="evidence at transcript level"/>